<accession>Q89FU2</accession>
<sequence length="485" mass="50491">MKLRDLIGNDAAIEPAVAALEVTGVALDSRVVRPGDLFFALAGSKTDGARFIDAAVAAGAVAIVGDHAPDGCKVPFIAVANPRRALALAAARFFPAQPATIAAVTGTSGKTSVAAFTRQIWERLGHASASIGTIGLVSPKRTVYGSLTTPDPIALHRQMDEIAREGVTHLAFEASSHGLDQYRLDGVRVSAGGFTNLSRDHMDYHPTVAHYLAAKLRLFRELVPPGGAAVISADHDCSAEAIDAAKARGLRVMAVGRNGDGAGEGIRLTEVGVDGFSQKLTVEHRGKRYVVLLPLAGEFQVENALVSAGLAIGTGSDAANVFASLEHLEGAKGRLERVGERNGAPIFVDYAHKPDALAKALQALRPYAKRRLVVVFGAGGDRDAGKRPIMGEIAAENADGVIITDDNPRSEQPEAIRAAILATAKGAREIGDRAAAIRAAIEELEQGDALLIAGKGHETGQIVGSEVLPFSDHEAVAAALASRVA</sequence>
<gene>
    <name evidence="1" type="primary">murE</name>
    <name type="ordered locus">bll6607</name>
</gene>
<protein>
    <recommendedName>
        <fullName evidence="1">UDP-N-acetylmuramoyl-L-alanyl-D-glutamate--2,6-diaminopimelate ligase</fullName>
        <ecNumber evidence="1">6.3.2.13</ecNumber>
    </recommendedName>
    <alternativeName>
        <fullName evidence="1">Meso-A2pm-adding enzyme</fullName>
    </alternativeName>
    <alternativeName>
        <fullName evidence="1">Meso-diaminopimelate-adding enzyme</fullName>
    </alternativeName>
    <alternativeName>
        <fullName evidence="1">UDP-MurNAc-L-Ala-D-Glu:meso-diaminopimelate ligase</fullName>
    </alternativeName>
    <alternativeName>
        <fullName evidence="1">UDP-MurNAc-tripeptide synthetase</fullName>
    </alternativeName>
    <alternativeName>
        <fullName evidence="1">UDP-N-acetylmuramyl-tripeptide synthetase</fullName>
    </alternativeName>
</protein>
<dbReference type="EC" id="6.3.2.13" evidence="1"/>
<dbReference type="EMBL" id="BA000040">
    <property type="protein sequence ID" value="BAC51872.1"/>
    <property type="molecule type" value="Genomic_DNA"/>
</dbReference>
<dbReference type="RefSeq" id="NP_773247.1">
    <property type="nucleotide sequence ID" value="NC_004463.1"/>
</dbReference>
<dbReference type="RefSeq" id="WP_011089347.1">
    <property type="nucleotide sequence ID" value="NC_004463.1"/>
</dbReference>
<dbReference type="SMR" id="Q89FU2"/>
<dbReference type="FunCoup" id="Q89FU2">
    <property type="interactions" value="674"/>
</dbReference>
<dbReference type="STRING" id="224911.AAV28_30615"/>
<dbReference type="EnsemblBacteria" id="BAC51872">
    <property type="protein sequence ID" value="BAC51872"/>
    <property type="gene ID" value="BAC51872"/>
</dbReference>
<dbReference type="GeneID" id="46493579"/>
<dbReference type="KEGG" id="bja:bll6607"/>
<dbReference type="PATRIC" id="fig|224911.44.peg.6619"/>
<dbReference type="eggNOG" id="COG0769">
    <property type="taxonomic scope" value="Bacteria"/>
</dbReference>
<dbReference type="HOGENOM" id="CLU_022291_3_1_5"/>
<dbReference type="InParanoid" id="Q89FU2"/>
<dbReference type="OrthoDB" id="9800958at2"/>
<dbReference type="PhylomeDB" id="Q89FU2"/>
<dbReference type="UniPathway" id="UPA00219"/>
<dbReference type="Proteomes" id="UP000002526">
    <property type="component" value="Chromosome"/>
</dbReference>
<dbReference type="GO" id="GO:0005737">
    <property type="term" value="C:cytoplasm"/>
    <property type="evidence" value="ECO:0007669"/>
    <property type="project" value="UniProtKB-SubCell"/>
</dbReference>
<dbReference type="GO" id="GO:0005524">
    <property type="term" value="F:ATP binding"/>
    <property type="evidence" value="ECO:0007669"/>
    <property type="project" value="UniProtKB-UniRule"/>
</dbReference>
<dbReference type="GO" id="GO:0000287">
    <property type="term" value="F:magnesium ion binding"/>
    <property type="evidence" value="ECO:0007669"/>
    <property type="project" value="UniProtKB-UniRule"/>
</dbReference>
<dbReference type="GO" id="GO:0008765">
    <property type="term" value="F:UDP-N-acetylmuramoylalanyl-D-glutamate-2,6-diaminopimelate ligase activity"/>
    <property type="evidence" value="ECO:0007669"/>
    <property type="project" value="UniProtKB-UniRule"/>
</dbReference>
<dbReference type="GO" id="GO:0051301">
    <property type="term" value="P:cell division"/>
    <property type="evidence" value="ECO:0007669"/>
    <property type="project" value="UniProtKB-KW"/>
</dbReference>
<dbReference type="GO" id="GO:0071555">
    <property type="term" value="P:cell wall organization"/>
    <property type="evidence" value="ECO:0007669"/>
    <property type="project" value="UniProtKB-KW"/>
</dbReference>
<dbReference type="GO" id="GO:0009252">
    <property type="term" value="P:peptidoglycan biosynthetic process"/>
    <property type="evidence" value="ECO:0007669"/>
    <property type="project" value="UniProtKB-UniRule"/>
</dbReference>
<dbReference type="GO" id="GO:0008360">
    <property type="term" value="P:regulation of cell shape"/>
    <property type="evidence" value="ECO:0007669"/>
    <property type="project" value="UniProtKB-KW"/>
</dbReference>
<dbReference type="Gene3D" id="3.90.190.20">
    <property type="entry name" value="Mur ligase, C-terminal domain"/>
    <property type="match status" value="1"/>
</dbReference>
<dbReference type="Gene3D" id="3.40.1190.10">
    <property type="entry name" value="Mur-like, catalytic domain"/>
    <property type="match status" value="1"/>
</dbReference>
<dbReference type="Gene3D" id="3.40.1390.10">
    <property type="entry name" value="MurE/MurF, N-terminal domain"/>
    <property type="match status" value="1"/>
</dbReference>
<dbReference type="HAMAP" id="MF_00208">
    <property type="entry name" value="MurE"/>
    <property type="match status" value="1"/>
</dbReference>
<dbReference type="InterPro" id="IPR036565">
    <property type="entry name" value="Mur-like_cat_sf"/>
</dbReference>
<dbReference type="InterPro" id="IPR004101">
    <property type="entry name" value="Mur_ligase_C"/>
</dbReference>
<dbReference type="InterPro" id="IPR036615">
    <property type="entry name" value="Mur_ligase_C_dom_sf"/>
</dbReference>
<dbReference type="InterPro" id="IPR013221">
    <property type="entry name" value="Mur_ligase_cen"/>
</dbReference>
<dbReference type="InterPro" id="IPR000713">
    <property type="entry name" value="Mur_ligase_N"/>
</dbReference>
<dbReference type="InterPro" id="IPR035911">
    <property type="entry name" value="MurE/MurF_N"/>
</dbReference>
<dbReference type="InterPro" id="IPR005761">
    <property type="entry name" value="UDP-N-AcMur-Glu-dNH2Pim_ligase"/>
</dbReference>
<dbReference type="NCBIfam" id="TIGR01085">
    <property type="entry name" value="murE"/>
    <property type="match status" value="1"/>
</dbReference>
<dbReference type="NCBIfam" id="NF001124">
    <property type="entry name" value="PRK00139.1-2"/>
    <property type="match status" value="1"/>
</dbReference>
<dbReference type="NCBIfam" id="NF001126">
    <property type="entry name" value="PRK00139.1-4"/>
    <property type="match status" value="1"/>
</dbReference>
<dbReference type="PANTHER" id="PTHR23135">
    <property type="entry name" value="MUR LIGASE FAMILY MEMBER"/>
    <property type="match status" value="1"/>
</dbReference>
<dbReference type="PANTHER" id="PTHR23135:SF4">
    <property type="entry name" value="UDP-N-ACETYLMURAMOYL-L-ALANYL-D-GLUTAMATE--2,6-DIAMINOPIMELATE LIGASE MURE HOMOLOG, CHLOROPLASTIC"/>
    <property type="match status" value="1"/>
</dbReference>
<dbReference type="Pfam" id="PF01225">
    <property type="entry name" value="Mur_ligase"/>
    <property type="match status" value="1"/>
</dbReference>
<dbReference type="Pfam" id="PF02875">
    <property type="entry name" value="Mur_ligase_C"/>
    <property type="match status" value="1"/>
</dbReference>
<dbReference type="Pfam" id="PF08245">
    <property type="entry name" value="Mur_ligase_M"/>
    <property type="match status" value="1"/>
</dbReference>
<dbReference type="SUPFAM" id="SSF53623">
    <property type="entry name" value="MurD-like peptide ligases, catalytic domain"/>
    <property type="match status" value="1"/>
</dbReference>
<dbReference type="SUPFAM" id="SSF53244">
    <property type="entry name" value="MurD-like peptide ligases, peptide-binding domain"/>
    <property type="match status" value="1"/>
</dbReference>
<dbReference type="SUPFAM" id="SSF63418">
    <property type="entry name" value="MurE/MurF N-terminal domain"/>
    <property type="match status" value="1"/>
</dbReference>
<reference key="1">
    <citation type="journal article" date="2002" name="DNA Res.">
        <title>Complete genomic sequence of nitrogen-fixing symbiotic bacterium Bradyrhizobium japonicum USDA110.</title>
        <authorList>
            <person name="Kaneko T."/>
            <person name="Nakamura Y."/>
            <person name="Sato S."/>
            <person name="Minamisawa K."/>
            <person name="Uchiumi T."/>
            <person name="Sasamoto S."/>
            <person name="Watanabe A."/>
            <person name="Idesawa K."/>
            <person name="Iriguchi M."/>
            <person name="Kawashima K."/>
            <person name="Kohara M."/>
            <person name="Matsumoto M."/>
            <person name="Shimpo S."/>
            <person name="Tsuruoka H."/>
            <person name="Wada T."/>
            <person name="Yamada M."/>
            <person name="Tabata S."/>
        </authorList>
    </citation>
    <scope>NUCLEOTIDE SEQUENCE [LARGE SCALE GENOMIC DNA]</scope>
    <source>
        <strain>JCM 10833 / BCRC 13528 / IAM 13628 / NBRC 14792 / USDA 110</strain>
    </source>
</reference>
<comment type="function">
    <text evidence="1">Catalyzes the addition of meso-diaminopimelic acid to the nucleotide precursor UDP-N-acetylmuramoyl-L-alanyl-D-glutamate (UMAG) in the biosynthesis of bacterial cell-wall peptidoglycan.</text>
</comment>
<comment type="catalytic activity">
    <reaction evidence="1">
        <text>UDP-N-acetyl-alpha-D-muramoyl-L-alanyl-D-glutamate + meso-2,6-diaminopimelate + ATP = UDP-N-acetyl-alpha-D-muramoyl-L-alanyl-gamma-D-glutamyl-meso-2,6-diaminopimelate + ADP + phosphate + H(+)</text>
        <dbReference type="Rhea" id="RHEA:23676"/>
        <dbReference type="ChEBI" id="CHEBI:15378"/>
        <dbReference type="ChEBI" id="CHEBI:30616"/>
        <dbReference type="ChEBI" id="CHEBI:43474"/>
        <dbReference type="ChEBI" id="CHEBI:57791"/>
        <dbReference type="ChEBI" id="CHEBI:83900"/>
        <dbReference type="ChEBI" id="CHEBI:83905"/>
        <dbReference type="ChEBI" id="CHEBI:456216"/>
        <dbReference type="EC" id="6.3.2.13"/>
    </reaction>
</comment>
<comment type="cofactor">
    <cofactor evidence="1">
        <name>Mg(2+)</name>
        <dbReference type="ChEBI" id="CHEBI:18420"/>
    </cofactor>
</comment>
<comment type="pathway">
    <text evidence="1">Cell wall biogenesis; peptidoglycan biosynthesis.</text>
</comment>
<comment type="subcellular location">
    <subcellularLocation>
        <location evidence="1">Cytoplasm</location>
    </subcellularLocation>
</comment>
<comment type="PTM">
    <text evidence="1">Carboxylation is probably crucial for Mg(2+) binding and, consequently, for the gamma-phosphate positioning of ATP.</text>
</comment>
<comment type="similarity">
    <text evidence="1">Belongs to the MurCDEF family. MurE subfamily.</text>
</comment>
<organism>
    <name type="scientific">Bradyrhizobium diazoefficiens (strain JCM 10833 / BCRC 13528 / IAM 13628 / NBRC 14792 / USDA 110)</name>
    <dbReference type="NCBI Taxonomy" id="224911"/>
    <lineage>
        <taxon>Bacteria</taxon>
        <taxon>Pseudomonadati</taxon>
        <taxon>Pseudomonadota</taxon>
        <taxon>Alphaproteobacteria</taxon>
        <taxon>Hyphomicrobiales</taxon>
        <taxon>Nitrobacteraceae</taxon>
        <taxon>Bradyrhizobium</taxon>
    </lineage>
</organism>
<name>MURE_BRADU</name>
<keyword id="KW-0067">ATP-binding</keyword>
<keyword id="KW-0131">Cell cycle</keyword>
<keyword id="KW-0132">Cell division</keyword>
<keyword id="KW-0133">Cell shape</keyword>
<keyword id="KW-0961">Cell wall biogenesis/degradation</keyword>
<keyword id="KW-0963">Cytoplasm</keyword>
<keyword id="KW-0436">Ligase</keyword>
<keyword id="KW-0460">Magnesium</keyword>
<keyword id="KW-0547">Nucleotide-binding</keyword>
<keyword id="KW-0573">Peptidoglycan synthesis</keyword>
<keyword id="KW-1185">Reference proteome</keyword>
<feature type="chain" id="PRO_0000101870" description="UDP-N-acetylmuramoyl-L-alanyl-D-glutamate--2,6-diaminopimelate ligase">
    <location>
        <begin position="1"/>
        <end position="485"/>
    </location>
</feature>
<feature type="short sequence motif" description="Meso-diaminopimelate recognition motif">
    <location>
        <begin position="406"/>
        <end position="409"/>
    </location>
</feature>
<feature type="binding site" evidence="1">
    <location>
        <position position="27"/>
    </location>
    <ligand>
        <name>UDP-N-acetyl-alpha-D-muramoyl-L-alanyl-D-glutamate</name>
        <dbReference type="ChEBI" id="CHEBI:83900"/>
    </ligand>
</feature>
<feature type="binding site" evidence="1">
    <location>
        <position position="29"/>
    </location>
    <ligand>
        <name>UDP-N-acetyl-alpha-D-muramoyl-L-alanyl-D-glutamate</name>
        <dbReference type="ChEBI" id="CHEBI:83900"/>
    </ligand>
</feature>
<feature type="binding site" evidence="1">
    <location>
        <begin position="106"/>
        <end position="112"/>
    </location>
    <ligand>
        <name>ATP</name>
        <dbReference type="ChEBI" id="CHEBI:30616"/>
    </ligand>
</feature>
<feature type="binding site" evidence="1">
    <location>
        <begin position="148"/>
        <end position="149"/>
    </location>
    <ligand>
        <name>UDP-N-acetyl-alpha-D-muramoyl-L-alanyl-D-glutamate</name>
        <dbReference type="ChEBI" id="CHEBI:83900"/>
    </ligand>
</feature>
<feature type="binding site" evidence="1">
    <location>
        <position position="175"/>
    </location>
    <ligand>
        <name>UDP-N-acetyl-alpha-D-muramoyl-L-alanyl-D-glutamate</name>
        <dbReference type="ChEBI" id="CHEBI:83900"/>
    </ligand>
</feature>
<feature type="binding site" evidence="1">
    <location>
        <position position="181"/>
    </location>
    <ligand>
        <name>UDP-N-acetyl-alpha-D-muramoyl-L-alanyl-D-glutamate</name>
        <dbReference type="ChEBI" id="CHEBI:83900"/>
    </ligand>
</feature>
<feature type="binding site" evidence="1">
    <location>
        <position position="183"/>
    </location>
    <ligand>
        <name>UDP-N-acetyl-alpha-D-muramoyl-L-alanyl-D-glutamate</name>
        <dbReference type="ChEBI" id="CHEBI:83900"/>
    </ligand>
</feature>
<feature type="binding site" evidence="1">
    <location>
        <position position="382"/>
    </location>
    <ligand>
        <name>meso-2,6-diaminopimelate</name>
        <dbReference type="ChEBI" id="CHEBI:57791"/>
    </ligand>
</feature>
<feature type="binding site" evidence="1">
    <location>
        <begin position="406"/>
        <end position="409"/>
    </location>
    <ligand>
        <name>meso-2,6-diaminopimelate</name>
        <dbReference type="ChEBI" id="CHEBI:57791"/>
    </ligand>
</feature>
<feature type="binding site" evidence="1">
    <location>
        <position position="454"/>
    </location>
    <ligand>
        <name>meso-2,6-diaminopimelate</name>
        <dbReference type="ChEBI" id="CHEBI:57791"/>
    </ligand>
</feature>
<feature type="binding site" evidence="1">
    <location>
        <position position="458"/>
    </location>
    <ligand>
        <name>meso-2,6-diaminopimelate</name>
        <dbReference type="ChEBI" id="CHEBI:57791"/>
    </ligand>
</feature>
<feature type="modified residue" description="N6-carboxylysine" evidence="1">
    <location>
        <position position="215"/>
    </location>
</feature>
<proteinExistence type="inferred from homology"/>
<evidence type="ECO:0000255" key="1">
    <source>
        <dbReference type="HAMAP-Rule" id="MF_00208"/>
    </source>
</evidence>